<name>ILVD_DESHD</name>
<protein>
    <recommendedName>
        <fullName evidence="1">Dihydroxy-acid dehydratase</fullName>
        <shortName evidence="1">DAD</shortName>
        <ecNumber evidence="1">4.2.1.9</ecNumber>
    </recommendedName>
</protein>
<evidence type="ECO:0000255" key="1">
    <source>
        <dbReference type="HAMAP-Rule" id="MF_00012"/>
    </source>
</evidence>
<sequence>MNSNTIKTGIDRAPHRSLLKALGLTDRELSKPFIGVVNSFTELVPGHMHLRQVTEAVKAGIRENGGTPFEFSTIAVCDGIAMGHEGMHYSLASREIVADAIEVMAKGHQLDALVLIPSCDKVVPGMLMAAMRLNIPAIVVSGGPMLPGRFEGNPVTLSTVFEGVGQVHAGKKDEAWLHELEAKACPTCGSCAGMFTANSMNCLTEALGMALPGNGTIPAVYSERLVLAKETGYQVMELYRQDLKPRDIVTQSTLKNGVAVDMALGCSTNTILHLPAIANEGDIDWDLGKVNEVSEKTPQICKLAPASETPLAALHEAGGVSAVLKQLLDAGLIDGSTMTVSGVTMAERLKDAKVVDTEIIRPQSNPFSQRGGLRILFGNLAPEGAVIKQGALSSQDFVFEGSAKVFNGEVPAAEAIRNLEIKAGDVVVIRYEGPKGGPGMREMLGPTATLAGMGLDSDVALLTDGRFSGASRGLSIGHVSPEAALGGDIALLKDGDKIRIDIGKGRLEWIVSEEEREQRRQEFAAMAVKPDHLKPELRQGYLGRYAYFVQSASKGAALRRVKE</sequence>
<gene>
    <name evidence="1" type="primary">ilvD</name>
    <name type="ordered locus">Dhaf_2481</name>
</gene>
<organism>
    <name type="scientific">Desulfitobacterium hafniense (strain DSM 10664 / DCB-2)</name>
    <dbReference type="NCBI Taxonomy" id="272564"/>
    <lineage>
        <taxon>Bacteria</taxon>
        <taxon>Bacillati</taxon>
        <taxon>Bacillota</taxon>
        <taxon>Clostridia</taxon>
        <taxon>Eubacteriales</taxon>
        <taxon>Desulfitobacteriaceae</taxon>
        <taxon>Desulfitobacterium</taxon>
    </lineage>
</organism>
<comment type="function">
    <text evidence="1">Functions in the biosynthesis of branched-chain amino acids. Catalyzes the dehydration of (2R,3R)-2,3-dihydroxy-3-methylpentanoate (2,3-dihydroxy-3-methylvalerate) into 2-oxo-3-methylpentanoate (2-oxo-3-methylvalerate) and of (2R)-2,3-dihydroxy-3-methylbutanoate (2,3-dihydroxyisovalerate) into 2-oxo-3-methylbutanoate (2-oxoisovalerate), the penultimate precursor to L-isoleucine and L-valine, respectively.</text>
</comment>
<comment type="catalytic activity">
    <reaction evidence="1">
        <text>(2R)-2,3-dihydroxy-3-methylbutanoate = 3-methyl-2-oxobutanoate + H2O</text>
        <dbReference type="Rhea" id="RHEA:24809"/>
        <dbReference type="ChEBI" id="CHEBI:11851"/>
        <dbReference type="ChEBI" id="CHEBI:15377"/>
        <dbReference type="ChEBI" id="CHEBI:49072"/>
        <dbReference type="EC" id="4.2.1.9"/>
    </reaction>
    <physiologicalReaction direction="left-to-right" evidence="1">
        <dbReference type="Rhea" id="RHEA:24810"/>
    </physiologicalReaction>
</comment>
<comment type="catalytic activity">
    <reaction evidence="1">
        <text>(2R,3R)-2,3-dihydroxy-3-methylpentanoate = (S)-3-methyl-2-oxopentanoate + H2O</text>
        <dbReference type="Rhea" id="RHEA:27694"/>
        <dbReference type="ChEBI" id="CHEBI:15377"/>
        <dbReference type="ChEBI" id="CHEBI:35146"/>
        <dbReference type="ChEBI" id="CHEBI:49258"/>
        <dbReference type="EC" id="4.2.1.9"/>
    </reaction>
    <physiologicalReaction direction="left-to-right" evidence="1">
        <dbReference type="Rhea" id="RHEA:27695"/>
    </physiologicalReaction>
</comment>
<comment type="cofactor">
    <cofactor evidence="1">
        <name>[2Fe-2S] cluster</name>
        <dbReference type="ChEBI" id="CHEBI:190135"/>
    </cofactor>
    <text evidence="1">Binds 1 [2Fe-2S] cluster per subunit. This cluster acts as a Lewis acid cofactor.</text>
</comment>
<comment type="cofactor">
    <cofactor evidence="1">
        <name>Mg(2+)</name>
        <dbReference type="ChEBI" id="CHEBI:18420"/>
    </cofactor>
</comment>
<comment type="pathway">
    <text evidence="1">Amino-acid biosynthesis; L-isoleucine biosynthesis; L-isoleucine from 2-oxobutanoate: step 3/4.</text>
</comment>
<comment type="pathway">
    <text evidence="1">Amino-acid biosynthesis; L-valine biosynthesis; L-valine from pyruvate: step 3/4.</text>
</comment>
<comment type="subunit">
    <text evidence="1">Homodimer.</text>
</comment>
<comment type="similarity">
    <text evidence="1">Belongs to the IlvD/Edd family.</text>
</comment>
<accession>B8FU95</accession>
<reference key="1">
    <citation type="journal article" date="2012" name="BMC Microbiol.">
        <title>Genome sequence of Desulfitobacterium hafniense DCB-2, a Gram-positive anaerobe capable of dehalogenation and metal reduction.</title>
        <authorList>
            <person name="Kim S.H."/>
            <person name="Harzman C."/>
            <person name="Davis J.K."/>
            <person name="Hutcheson R."/>
            <person name="Broderick J.B."/>
            <person name="Marsh T.L."/>
            <person name="Tiedje J.M."/>
        </authorList>
    </citation>
    <scope>NUCLEOTIDE SEQUENCE [LARGE SCALE GENOMIC DNA]</scope>
    <source>
        <strain>DSM 10664 / DCB-2</strain>
    </source>
</reference>
<proteinExistence type="inferred from homology"/>
<dbReference type="EC" id="4.2.1.9" evidence="1"/>
<dbReference type="EMBL" id="CP001336">
    <property type="protein sequence ID" value="ACL20509.1"/>
    <property type="molecule type" value="Genomic_DNA"/>
</dbReference>
<dbReference type="RefSeq" id="WP_015944057.1">
    <property type="nucleotide sequence ID" value="NC_011830.1"/>
</dbReference>
<dbReference type="SMR" id="B8FU95"/>
<dbReference type="KEGG" id="dhd:Dhaf_2481"/>
<dbReference type="HOGENOM" id="CLU_014271_4_2_9"/>
<dbReference type="UniPathway" id="UPA00047">
    <property type="reaction ID" value="UER00057"/>
</dbReference>
<dbReference type="UniPathway" id="UPA00049">
    <property type="reaction ID" value="UER00061"/>
</dbReference>
<dbReference type="Proteomes" id="UP000007726">
    <property type="component" value="Chromosome"/>
</dbReference>
<dbReference type="GO" id="GO:0005829">
    <property type="term" value="C:cytosol"/>
    <property type="evidence" value="ECO:0007669"/>
    <property type="project" value="TreeGrafter"/>
</dbReference>
<dbReference type="GO" id="GO:0051537">
    <property type="term" value="F:2 iron, 2 sulfur cluster binding"/>
    <property type="evidence" value="ECO:0007669"/>
    <property type="project" value="UniProtKB-UniRule"/>
</dbReference>
<dbReference type="GO" id="GO:0004160">
    <property type="term" value="F:dihydroxy-acid dehydratase activity"/>
    <property type="evidence" value="ECO:0007669"/>
    <property type="project" value="UniProtKB-UniRule"/>
</dbReference>
<dbReference type="GO" id="GO:0000287">
    <property type="term" value="F:magnesium ion binding"/>
    <property type="evidence" value="ECO:0007669"/>
    <property type="project" value="UniProtKB-UniRule"/>
</dbReference>
<dbReference type="GO" id="GO:0009097">
    <property type="term" value="P:isoleucine biosynthetic process"/>
    <property type="evidence" value="ECO:0007669"/>
    <property type="project" value="UniProtKB-UniRule"/>
</dbReference>
<dbReference type="GO" id="GO:0009099">
    <property type="term" value="P:L-valine biosynthetic process"/>
    <property type="evidence" value="ECO:0007669"/>
    <property type="project" value="UniProtKB-UniRule"/>
</dbReference>
<dbReference type="FunFam" id="3.50.30.80:FF:000001">
    <property type="entry name" value="Dihydroxy-acid dehydratase"/>
    <property type="match status" value="1"/>
</dbReference>
<dbReference type="Gene3D" id="3.50.30.80">
    <property type="entry name" value="IlvD/EDD C-terminal domain-like"/>
    <property type="match status" value="1"/>
</dbReference>
<dbReference type="HAMAP" id="MF_00012">
    <property type="entry name" value="IlvD"/>
    <property type="match status" value="1"/>
</dbReference>
<dbReference type="InterPro" id="IPR042096">
    <property type="entry name" value="Dihydro-acid_dehy_C"/>
</dbReference>
<dbReference type="InterPro" id="IPR004404">
    <property type="entry name" value="DihydroxyA_deHydtase"/>
</dbReference>
<dbReference type="InterPro" id="IPR020558">
    <property type="entry name" value="DiOHA_6PGluconate_deHydtase_CS"/>
</dbReference>
<dbReference type="InterPro" id="IPR056740">
    <property type="entry name" value="ILV_EDD_C"/>
</dbReference>
<dbReference type="InterPro" id="IPR000581">
    <property type="entry name" value="ILV_EDD_N"/>
</dbReference>
<dbReference type="InterPro" id="IPR037237">
    <property type="entry name" value="IlvD/EDD_N"/>
</dbReference>
<dbReference type="NCBIfam" id="TIGR00110">
    <property type="entry name" value="ilvD"/>
    <property type="match status" value="1"/>
</dbReference>
<dbReference type="NCBIfam" id="NF002068">
    <property type="entry name" value="PRK00911.1"/>
    <property type="match status" value="1"/>
</dbReference>
<dbReference type="PANTHER" id="PTHR43661">
    <property type="entry name" value="D-XYLONATE DEHYDRATASE"/>
    <property type="match status" value="1"/>
</dbReference>
<dbReference type="PANTHER" id="PTHR43661:SF3">
    <property type="entry name" value="D-XYLONATE DEHYDRATASE YAGF-RELATED"/>
    <property type="match status" value="1"/>
</dbReference>
<dbReference type="Pfam" id="PF24877">
    <property type="entry name" value="ILV_EDD_C"/>
    <property type="match status" value="1"/>
</dbReference>
<dbReference type="Pfam" id="PF00920">
    <property type="entry name" value="ILVD_EDD_N"/>
    <property type="match status" value="1"/>
</dbReference>
<dbReference type="SUPFAM" id="SSF143975">
    <property type="entry name" value="IlvD/EDD N-terminal domain-like"/>
    <property type="match status" value="1"/>
</dbReference>
<dbReference type="SUPFAM" id="SSF52016">
    <property type="entry name" value="LeuD/IlvD-like"/>
    <property type="match status" value="1"/>
</dbReference>
<dbReference type="PROSITE" id="PS00886">
    <property type="entry name" value="ILVD_EDD_1"/>
    <property type="match status" value="1"/>
</dbReference>
<dbReference type="PROSITE" id="PS00887">
    <property type="entry name" value="ILVD_EDD_2"/>
    <property type="match status" value="1"/>
</dbReference>
<feature type="chain" id="PRO_1000190662" description="Dihydroxy-acid dehydratase">
    <location>
        <begin position="1"/>
        <end position="563"/>
    </location>
</feature>
<feature type="active site" description="Proton acceptor" evidence="1">
    <location>
        <position position="468"/>
    </location>
</feature>
<feature type="binding site" evidence="1">
    <location>
        <position position="78"/>
    </location>
    <ligand>
        <name>Mg(2+)</name>
        <dbReference type="ChEBI" id="CHEBI:18420"/>
    </ligand>
</feature>
<feature type="binding site" evidence="1">
    <location>
        <position position="119"/>
    </location>
    <ligand>
        <name>[2Fe-2S] cluster</name>
        <dbReference type="ChEBI" id="CHEBI:190135"/>
    </ligand>
</feature>
<feature type="binding site" evidence="1">
    <location>
        <position position="120"/>
    </location>
    <ligand>
        <name>Mg(2+)</name>
        <dbReference type="ChEBI" id="CHEBI:18420"/>
    </ligand>
</feature>
<feature type="binding site" description="via carbamate group" evidence="1">
    <location>
        <position position="121"/>
    </location>
    <ligand>
        <name>Mg(2+)</name>
        <dbReference type="ChEBI" id="CHEBI:18420"/>
    </ligand>
</feature>
<feature type="binding site" evidence="1">
    <location>
        <position position="191"/>
    </location>
    <ligand>
        <name>[2Fe-2S] cluster</name>
        <dbReference type="ChEBI" id="CHEBI:190135"/>
    </ligand>
</feature>
<feature type="binding site" evidence="1">
    <location>
        <position position="442"/>
    </location>
    <ligand>
        <name>Mg(2+)</name>
        <dbReference type="ChEBI" id="CHEBI:18420"/>
    </ligand>
</feature>
<feature type="modified residue" description="N6-carboxylysine" evidence="1">
    <location>
        <position position="121"/>
    </location>
</feature>
<keyword id="KW-0001">2Fe-2S</keyword>
<keyword id="KW-0028">Amino-acid biosynthesis</keyword>
<keyword id="KW-0100">Branched-chain amino acid biosynthesis</keyword>
<keyword id="KW-0408">Iron</keyword>
<keyword id="KW-0411">Iron-sulfur</keyword>
<keyword id="KW-0456">Lyase</keyword>
<keyword id="KW-0460">Magnesium</keyword>
<keyword id="KW-0479">Metal-binding</keyword>